<reference key="1">
    <citation type="journal article" date="2005" name="Nucleic Acids Res.">
        <title>The genome sequence of Salmonella enterica serovar Choleraesuis, a highly invasive and resistant zoonotic pathogen.</title>
        <authorList>
            <person name="Chiu C.-H."/>
            <person name="Tang P."/>
            <person name="Chu C."/>
            <person name="Hu S."/>
            <person name="Bao Q."/>
            <person name="Yu J."/>
            <person name="Chou Y.-Y."/>
            <person name="Wang H.-S."/>
            <person name="Lee Y.-S."/>
        </authorList>
    </citation>
    <scope>NUCLEOTIDE SEQUENCE [LARGE SCALE GENOMIC DNA]</scope>
    <source>
        <strain>SC-B67</strain>
    </source>
</reference>
<organism>
    <name type="scientific">Salmonella choleraesuis (strain SC-B67)</name>
    <dbReference type="NCBI Taxonomy" id="321314"/>
    <lineage>
        <taxon>Bacteria</taxon>
        <taxon>Pseudomonadati</taxon>
        <taxon>Pseudomonadota</taxon>
        <taxon>Gammaproteobacteria</taxon>
        <taxon>Enterobacterales</taxon>
        <taxon>Enterobacteriaceae</taxon>
        <taxon>Salmonella</taxon>
    </lineage>
</organism>
<gene>
    <name evidence="1" type="primary">treF</name>
    <name type="ordered locus">SCH_3537</name>
</gene>
<proteinExistence type="inferred from homology"/>
<protein>
    <recommendedName>
        <fullName evidence="1">Cytoplasmic trehalase</fullName>
        <ecNumber evidence="1">3.2.1.28</ecNumber>
    </recommendedName>
    <alternativeName>
        <fullName evidence="1">Alpha,alpha-trehalase</fullName>
    </alternativeName>
    <alternativeName>
        <fullName evidence="1">Alpha,alpha-trehalose glucohydrolase</fullName>
    </alternativeName>
</protein>
<comment type="function">
    <text evidence="1">Hydrolyzes trehalose to glucose. Could be involved, in cells returning to low osmolarity conditions, in the utilization of the accumulated cytoplasmic trehalose, which was synthesized in response to high osmolarity.</text>
</comment>
<comment type="catalytic activity">
    <reaction evidence="1">
        <text>alpha,alpha-trehalose + H2O = alpha-D-glucose + beta-D-glucose</text>
        <dbReference type="Rhea" id="RHEA:32675"/>
        <dbReference type="ChEBI" id="CHEBI:15377"/>
        <dbReference type="ChEBI" id="CHEBI:15903"/>
        <dbReference type="ChEBI" id="CHEBI:16551"/>
        <dbReference type="ChEBI" id="CHEBI:17925"/>
        <dbReference type="EC" id="3.2.1.28"/>
    </reaction>
</comment>
<comment type="pathway">
    <text evidence="1">Glycan degradation; trehalose degradation; D-glucose from alpha,alpha-trehalose: step 1/1.</text>
</comment>
<comment type="subunit">
    <text evidence="1">Monomer.</text>
</comment>
<comment type="subcellular location">
    <subcellularLocation>
        <location evidence="1">Cytoplasm</location>
    </subcellularLocation>
</comment>
<comment type="similarity">
    <text evidence="1">Belongs to the glycosyl hydrolase 37 family.</text>
</comment>
<feature type="chain" id="PRO_1000064445" description="Cytoplasmic trehalase">
    <location>
        <begin position="1"/>
        <end position="549"/>
    </location>
</feature>
<feature type="active site" description="Proton donor/acceptor" evidence="1">
    <location>
        <position position="326"/>
    </location>
</feature>
<feature type="active site" description="Proton donor/acceptor" evidence="1">
    <location>
        <position position="509"/>
    </location>
</feature>
<feature type="binding site" evidence="1">
    <location>
        <position position="168"/>
    </location>
    <ligand>
        <name>substrate</name>
    </ligand>
</feature>
<feature type="binding site" evidence="1">
    <location>
        <begin position="175"/>
        <end position="176"/>
    </location>
    <ligand>
        <name>substrate</name>
    </ligand>
</feature>
<feature type="binding site" evidence="1">
    <location>
        <position position="212"/>
    </location>
    <ligand>
        <name>substrate</name>
    </ligand>
</feature>
<feature type="binding site" evidence="1">
    <location>
        <begin position="221"/>
        <end position="223"/>
    </location>
    <ligand>
        <name>substrate</name>
    </ligand>
</feature>
<feature type="binding site" evidence="1">
    <location>
        <begin position="292"/>
        <end position="294"/>
    </location>
    <ligand>
        <name>substrate</name>
    </ligand>
</feature>
<feature type="binding site" evidence="1">
    <location>
        <position position="324"/>
    </location>
    <ligand>
        <name>substrate</name>
    </ligand>
</feature>
<feature type="binding site" evidence="1">
    <location>
        <position position="525"/>
    </location>
    <ligand>
        <name>substrate</name>
    </ligand>
</feature>
<sequence length="549" mass="63644">MLNQKLNPTPSEDLTIDVDLLYETDPCELKLDEMIEAEPEPEMIEGLPASDALTPADRYLELFEHVQSTKLFPDSKTFPDCAPKMDPLDILIRYRKVRRHRDFDLRRFVENHFWLPETLSSEYVSNPENSLKEHIDQLWPILTREPQDHIPWSSLLALPQSYIVPGGRFSETYYWDSYFTMLGLAESGREDLLKCMADNFAWMIENYGHIPNGNRTYYLSRSQPPVFALMVELFEEDGVRGARRYLDHLKMEYAFWMDGAESLALNQAYRHVVRMPDGSLLNRYWDDRDTPRDESWLEDVETAKHSGRPPNEVYRDLRAGAASGWDYSSRWLRDAGRLASIRTTQFIPIDLNAFLYKLESAIANISALKGERDTEALFRQKASDRRAAVNHYLWDDENGCYRDYDWRREEMALFSAASIVPLYVGMANHEQADRLANVVRSRLLTPGGIMATEYETGEQWDKPNGWAPLQWMAIQGFKRYGDDMLGDEIAHNWLKTVNHFYQEHHKLIEKYHISGGTPREGGGGEYPLQDGFGWTNGVVRRLIGLYGEP</sequence>
<dbReference type="EC" id="3.2.1.28" evidence="1"/>
<dbReference type="EMBL" id="AE017220">
    <property type="protein sequence ID" value="AAX67443.1"/>
    <property type="molecule type" value="Genomic_DNA"/>
</dbReference>
<dbReference type="RefSeq" id="WP_000934257.1">
    <property type="nucleotide sequence ID" value="NC_006905.1"/>
</dbReference>
<dbReference type="SMR" id="Q57IL9"/>
<dbReference type="CAZy" id="GH37">
    <property type="family name" value="Glycoside Hydrolase Family 37"/>
</dbReference>
<dbReference type="KEGG" id="sec:SCH_3537"/>
<dbReference type="HOGENOM" id="CLU_006451_3_1_6"/>
<dbReference type="UniPathway" id="UPA00300">
    <property type="reaction ID" value="UER00535"/>
</dbReference>
<dbReference type="Proteomes" id="UP000000538">
    <property type="component" value="Chromosome"/>
</dbReference>
<dbReference type="GO" id="GO:0005737">
    <property type="term" value="C:cytoplasm"/>
    <property type="evidence" value="ECO:0007669"/>
    <property type="project" value="UniProtKB-SubCell"/>
</dbReference>
<dbReference type="GO" id="GO:0004555">
    <property type="term" value="F:alpha,alpha-trehalase activity"/>
    <property type="evidence" value="ECO:0007669"/>
    <property type="project" value="UniProtKB-UniRule"/>
</dbReference>
<dbReference type="GO" id="GO:0071474">
    <property type="term" value="P:cellular hyperosmotic response"/>
    <property type="evidence" value="ECO:0007669"/>
    <property type="project" value="InterPro"/>
</dbReference>
<dbReference type="GO" id="GO:0005993">
    <property type="term" value="P:trehalose catabolic process"/>
    <property type="evidence" value="ECO:0007669"/>
    <property type="project" value="UniProtKB-UniRule"/>
</dbReference>
<dbReference type="FunFam" id="1.50.10.10:FF:000003">
    <property type="entry name" value="Cytoplasmic trehalase"/>
    <property type="match status" value="1"/>
</dbReference>
<dbReference type="Gene3D" id="1.50.10.10">
    <property type="match status" value="1"/>
</dbReference>
<dbReference type="HAMAP" id="MF_01059">
    <property type="entry name" value="Cyt_trehalase"/>
    <property type="match status" value="1"/>
</dbReference>
<dbReference type="InterPro" id="IPR008928">
    <property type="entry name" value="6-hairpin_glycosidase_sf"/>
</dbReference>
<dbReference type="InterPro" id="IPR012341">
    <property type="entry name" value="6hp_glycosidase-like_sf"/>
</dbReference>
<dbReference type="InterPro" id="IPR023715">
    <property type="entry name" value="Cyt_trehalase"/>
</dbReference>
<dbReference type="InterPro" id="IPR001661">
    <property type="entry name" value="Glyco_hydro_37"/>
</dbReference>
<dbReference type="InterPro" id="IPR018232">
    <property type="entry name" value="Glyco_hydro_37_CS"/>
</dbReference>
<dbReference type="NCBIfam" id="NF009773">
    <property type="entry name" value="PRK13270.1"/>
    <property type="match status" value="1"/>
</dbReference>
<dbReference type="NCBIfam" id="NF009774">
    <property type="entry name" value="PRK13271.1"/>
    <property type="match status" value="1"/>
</dbReference>
<dbReference type="PANTHER" id="PTHR23403:SF8">
    <property type="entry name" value="CYTOPLASMIC TREHALASE"/>
    <property type="match status" value="1"/>
</dbReference>
<dbReference type="PANTHER" id="PTHR23403">
    <property type="entry name" value="TREHALASE"/>
    <property type="match status" value="1"/>
</dbReference>
<dbReference type="Pfam" id="PF01204">
    <property type="entry name" value="Trehalase"/>
    <property type="match status" value="1"/>
</dbReference>
<dbReference type="PRINTS" id="PR00744">
    <property type="entry name" value="GLHYDRLASE37"/>
</dbReference>
<dbReference type="SUPFAM" id="SSF48208">
    <property type="entry name" value="Six-hairpin glycosidases"/>
    <property type="match status" value="1"/>
</dbReference>
<dbReference type="PROSITE" id="PS00927">
    <property type="entry name" value="TREHALASE_1"/>
    <property type="match status" value="1"/>
</dbReference>
<dbReference type="PROSITE" id="PS00928">
    <property type="entry name" value="TREHALASE_2"/>
    <property type="match status" value="1"/>
</dbReference>
<accession>Q57IL9</accession>
<evidence type="ECO:0000255" key="1">
    <source>
        <dbReference type="HAMAP-Rule" id="MF_01059"/>
    </source>
</evidence>
<name>TREF_SALCH</name>
<keyword id="KW-0963">Cytoplasm</keyword>
<keyword id="KW-0326">Glycosidase</keyword>
<keyword id="KW-0378">Hydrolase</keyword>